<sequence length="545" mass="60030">MTTKYIFVTGGVVSSLGKGIAAGSLAAILEARGLDVTILKLDPYINVDPGTMSPIQHGEVFVTDDGAETDLDLGHYERYIRTRMTARNNFTTGRVYSEVMAKERRGDYLGATIQVIPHITNEIQERIVAGGKGHDIAIVELGGTVGDIESQPFLEAIRQLGLKVGRDSVIYMHLTLLPYLKTAGEVKTKPTQHSVKELRSLGIQPDILVCRSEVNIPINERVKIALFCNVTEKSVILLRDVDSIYKIPALLKAQGLDEICVKRFGLDCPEADLSEWAQVVSEEANTSNEVIIGMVGKYTELPDAYKSVNEALKHGGLKNAASVKIKYIDSQDVEVRGVSILEGVDAILVPGGFGERGIEGKILAAQYARVNKIPYLGICLGMQVAIIEFARNVAGLKNAHSTEFEANCDQPVVGLITEWLDKTGEVEQRTENSDLGGTMRVGAQLCHLKKGSKVFDMYGTKEIFERHRHRYEVNNNLLPILEKAGLVVTGLSEDKKLVEIIEIPNHPWFVASQFHPEFTSTPRDGHPLFKGFIKSAIDHQQGRFE</sequence>
<evidence type="ECO:0000255" key="1">
    <source>
        <dbReference type="HAMAP-Rule" id="MF_01227"/>
    </source>
</evidence>
<comment type="function">
    <text evidence="1">Catalyzes the ATP-dependent amination of UTP to CTP with either L-glutamine or ammonia as the source of nitrogen. Regulates intracellular CTP levels through interactions with the four ribonucleotide triphosphates.</text>
</comment>
<comment type="catalytic activity">
    <reaction evidence="1">
        <text>UTP + L-glutamine + ATP + H2O = CTP + L-glutamate + ADP + phosphate + 2 H(+)</text>
        <dbReference type="Rhea" id="RHEA:26426"/>
        <dbReference type="ChEBI" id="CHEBI:15377"/>
        <dbReference type="ChEBI" id="CHEBI:15378"/>
        <dbReference type="ChEBI" id="CHEBI:29985"/>
        <dbReference type="ChEBI" id="CHEBI:30616"/>
        <dbReference type="ChEBI" id="CHEBI:37563"/>
        <dbReference type="ChEBI" id="CHEBI:43474"/>
        <dbReference type="ChEBI" id="CHEBI:46398"/>
        <dbReference type="ChEBI" id="CHEBI:58359"/>
        <dbReference type="ChEBI" id="CHEBI:456216"/>
        <dbReference type="EC" id="6.3.4.2"/>
    </reaction>
</comment>
<comment type="catalytic activity">
    <reaction evidence="1">
        <text>L-glutamine + H2O = L-glutamate + NH4(+)</text>
        <dbReference type="Rhea" id="RHEA:15889"/>
        <dbReference type="ChEBI" id="CHEBI:15377"/>
        <dbReference type="ChEBI" id="CHEBI:28938"/>
        <dbReference type="ChEBI" id="CHEBI:29985"/>
        <dbReference type="ChEBI" id="CHEBI:58359"/>
    </reaction>
</comment>
<comment type="catalytic activity">
    <reaction evidence="1">
        <text>UTP + NH4(+) + ATP = CTP + ADP + phosphate + 2 H(+)</text>
        <dbReference type="Rhea" id="RHEA:16597"/>
        <dbReference type="ChEBI" id="CHEBI:15378"/>
        <dbReference type="ChEBI" id="CHEBI:28938"/>
        <dbReference type="ChEBI" id="CHEBI:30616"/>
        <dbReference type="ChEBI" id="CHEBI:37563"/>
        <dbReference type="ChEBI" id="CHEBI:43474"/>
        <dbReference type="ChEBI" id="CHEBI:46398"/>
        <dbReference type="ChEBI" id="CHEBI:456216"/>
    </reaction>
</comment>
<comment type="activity regulation">
    <text evidence="1">Allosterically activated by GTP, when glutamine is the substrate; GTP has no effect on the reaction when ammonia is the substrate. The allosteric effector GTP functions by stabilizing the protein conformation that binds the tetrahedral intermediate(s) formed during glutamine hydrolysis. Inhibited by the product CTP, via allosteric rather than competitive inhibition.</text>
</comment>
<comment type="pathway">
    <text evidence="1">Pyrimidine metabolism; CTP biosynthesis via de novo pathway; CTP from UDP: step 2/2.</text>
</comment>
<comment type="subunit">
    <text evidence="1">Homotetramer.</text>
</comment>
<comment type="miscellaneous">
    <text evidence="1">CTPSs have evolved a hybrid strategy for distinguishing between UTP and CTP. The overlapping regions of the product feedback inhibitory and substrate sites recognize a common feature in both compounds, the triphosphate moiety. To differentiate isosteric substrate and product pyrimidine rings, an additional pocket far from the expected kinase/ligase catalytic site, specifically recognizes the cytosine and ribose portions of the product inhibitor.</text>
</comment>
<comment type="similarity">
    <text evidence="1">Belongs to the CTP synthase family.</text>
</comment>
<reference key="1">
    <citation type="journal article" date="2008" name="BMC Genomics">
        <title>Genomics of an extreme psychrophile, Psychromonas ingrahamii.</title>
        <authorList>
            <person name="Riley M."/>
            <person name="Staley J.T."/>
            <person name="Danchin A."/>
            <person name="Wang T.Z."/>
            <person name="Brettin T.S."/>
            <person name="Hauser L.J."/>
            <person name="Land M.L."/>
            <person name="Thompson L.S."/>
        </authorList>
    </citation>
    <scope>NUCLEOTIDE SEQUENCE [LARGE SCALE GENOMIC DNA]</scope>
    <source>
        <strain>DSM 17664 / CCUG 51855 / 37</strain>
    </source>
</reference>
<protein>
    <recommendedName>
        <fullName evidence="1">CTP synthase</fullName>
        <ecNumber evidence="1">6.3.4.2</ecNumber>
    </recommendedName>
    <alternativeName>
        <fullName evidence="1">Cytidine 5'-triphosphate synthase</fullName>
    </alternativeName>
    <alternativeName>
        <fullName evidence="1">Cytidine triphosphate synthetase</fullName>
        <shortName evidence="1">CTP synthetase</shortName>
        <shortName evidence="1">CTPS</shortName>
    </alternativeName>
    <alternativeName>
        <fullName evidence="1">UTP--ammonia ligase</fullName>
    </alternativeName>
</protein>
<dbReference type="EC" id="6.3.4.2" evidence="1"/>
<dbReference type="EMBL" id="CP000510">
    <property type="protein sequence ID" value="ABM02521.1"/>
    <property type="molecule type" value="Genomic_DNA"/>
</dbReference>
<dbReference type="RefSeq" id="WP_011769080.1">
    <property type="nucleotide sequence ID" value="NC_008709.1"/>
</dbReference>
<dbReference type="SMR" id="A1SSQ6"/>
<dbReference type="STRING" id="357804.Ping_0668"/>
<dbReference type="KEGG" id="pin:Ping_0668"/>
<dbReference type="eggNOG" id="COG0504">
    <property type="taxonomic scope" value="Bacteria"/>
</dbReference>
<dbReference type="HOGENOM" id="CLU_011675_5_0_6"/>
<dbReference type="OrthoDB" id="9801107at2"/>
<dbReference type="UniPathway" id="UPA00159">
    <property type="reaction ID" value="UER00277"/>
</dbReference>
<dbReference type="Proteomes" id="UP000000639">
    <property type="component" value="Chromosome"/>
</dbReference>
<dbReference type="GO" id="GO:0005829">
    <property type="term" value="C:cytosol"/>
    <property type="evidence" value="ECO:0007669"/>
    <property type="project" value="TreeGrafter"/>
</dbReference>
<dbReference type="GO" id="GO:0005524">
    <property type="term" value="F:ATP binding"/>
    <property type="evidence" value="ECO:0007669"/>
    <property type="project" value="UniProtKB-KW"/>
</dbReference>
<dbReference type="GO" id="GO:0003883">
    <property type="term" value="F:CTP synthase activity"/>
    <property type="evidence" value="ECO:0007669"/>
    <property type="project" value="UniProtKB-UniRule"/>
</dbReference>
<dbReference type="GO" id="GO:0004359">
    <property type="term" value="F:glutaminase activity"/>
    <property type="evidence" value="ECO:0007669"/>
    <property type="project" value="RHEA"/>
</dbReference>
<dbReference type="GO" id="GO:0042802">
    <property type="term" value="F:identical protein binding"/>
    <property type="evidence" value="ECO:0007669"/>
    <property type="project" value="TreeGrafter"/>
</dbReference>
<dbReference type="GO" id="GO:0046872">
    <property type="term" value="F:metal ion binding"/>
    <property type="evidence" value="ECO:0007669"/>
    <property type="project" value="UniProtKB-KW"/>
</dbReference>
<dbReference type="GO" id="GO:0044210">
    <property type="term" value="P:'de novo' CTP biosynthetic process"/>
    <property type="evidence" value="ECO:0007669"/>
    <property type="project" value="UniProtKB-UniRule"/>
</dbReference>
<dbReference type="GO" id="GO:0019856">
    <property type="term" value="P:pyrimidine nucleobase biosynthetic process"/>
    <property type="evidence" value="ECO:0007669"/>
    <property type="project" value="TreeGrafter"/>
</dbReference>
<dbReference type="CDD" id="cd03113">
    <property type="entry name" value="CTPS_N"/>
    <property type="match status" value="1"/>
</dbReference>
<dbReference type="CDD" id="cd01746">
    <property type="entry name" value="GATase1_CTP_Synthase"/>
    <property type="match status" value="1"/>
</dbReference>
<dbReference type="FunFam" id="3.40.50.300:FF:000009">
    <property type="entry name" value="CTP synthase"/>
    <property type="match status" value="1"/>
</dbReference>
<dbReference type="FunFam" id="3.40.50.880:FF:000002">
    <property type="entry name" value="CTP synthase"/>
    <property type="match status" value="1"/>
</dbReference>
<dbReference type="Gene3D" id="3.40.50.880">
    <property type="match status" value="1"/>
</dbReference>
<dbReference type="Gene3D" id="3.40.50.300">
    <property type="entry name" value="P-loop containing nucleotide triphosphate hydrolases"/>
    <property type="match status" value="1"/>
</dbReference>
<dbReference type="HAMAP" id="MF_01227">
    <property type="entry name" value="PyrG"/>
    <property type="match status" value="1"/>
</dbReference>
<dbReference type="InterPro" id="IPR029062">
    <property type="entry name" value="Class_I_gatase-like"/>
</dbReference>
<dbReference type="InterPro" id="IPR004468">
    <property type="entry name" value="CTP_synthase"/>
</dbReference>
<dbReference type="InterPro" id="IPR017456">
    <property type="entry name" value="CTP_synthase_N"/>
</dbReference>
<dbReference type="InterPro" id="IPR017926">
    <property type="entry name" value="GATASE"/>
</dbReference>
<dbReference type="InterPro" id="IPR033828">
    <property type="entry name" value="GATase1_CTP_Synthase"/>
</dbReference>
<dbReference type="InterPro" id="IPR027417">
    <property type="entry name" value="P-loop_NTPase"/>
</dbReference>
<dbReference type="NCBIfam" id="NF003792">
    <property type="entry name" value="PRK05380.1"/>
    <property type="match status" value="1"/>
</dbReference>
<dbReference type="NCBIfam" id="TIGR00337">
    <property type="entry name" value="PyrG"/>
    <property type="match status" value="1"/>
</dbReference>
<dbReference type="PANTHER" id="PTHR11550">
    <property type="entry name" value="CTP SYNTHASE"/>
    <property type="match status" value="1"/>
</dbReference>
<dbReference type="PANTHER" id="PTHR11550:SF0">
    <property type="entry name" value="CTP SYNTHASE-RELATED"/>
    <property type="match status" value="1"/>
</dbReference>
<dbReference type="Pfam" id="PF06418">
    <property type="entry name" value="CTP_synth_N"/>
    <property type="match status" value="1"/>
</dbReference>
<dbReference type="Pfam" id="PF00117">
    <property type="entry name" value="GATase"/>
    <property type="match status" value="1"/>
</dbReference>
<dbReference type="SUPFAM" id="SSF52317">
    <property type="entry name" value="Class I glutamine amidotransferase-like"/>
    <property type="match status" value="1"/>
</dbReference>
<dbReference type="SUPFAM" id="SSF52540">
    <property type="entry name" value="P-loop containing nucleoside triphosphate hydrolases"/>
    <property type="match status" value="1"/>
</dbReference>
<dbReference type="PROSITE" id="PS51273">
    <property type="entry name" value="GATASE_TYPE_1"/>
    <property type="match status" value="1"/>
</dbReference>
<gene>
    <name evidence="1" type="primary">pyrG</name>
    <name type="ordered locus">Ping_0668</name>
</gene>
<keyword id="KW-0067">ATP-binding</keyword>
<keyword id="KW-0315">Glutamine amidotransferase</keyword>
<keyword id="KW-0436">Ligase</keyword>
<keyword id="KW-0460">Magnesium</keyword>
<keyword id="KW-0479">Metal-binding</keyword>
<keyword id="KW-0547">Nucleotide-binding</keyword>
<keyword id="KW-0665">Pyrimidine biosynthesis</keyword>
<keyword id="KW-1185">Reference proteome</keyword>
<name>PYRG_PSYIN</name>
<proteinExistence type="inferred from homology"/>
<feature type="chain" id="PRO_1000139539" description="CTP synthase">
    <location>
        <begin position="1"/>
        <end position="545"/>
    </location>
</feature>
<feature type="domain" description="Glutamine amidotransferase type-1" evidence="1">
    <location>
        <begin position="291"/>
        <end position="542"/>
    </location>
</feature>
<feature type="region of interest" description="Amidoligase domain" evidence="1">
    <location>
        <begin position="1"/>
        <end position="266"/>
    </location>
</feature>
<feature type="active site" description="Nucleophile; for glutamine hydrolysis" evidence="1">
    <location>
        <position position="379"/>
    </location>
</feature>
<feature type="active site" evidence="1">
    <location>
        <position position="515"/>
    </location>
</feature>
<feature type="active site" evidence="1">
    <location>
        <position position="517"/>
    </location>
</feature>
<feature type="binding site" evidence="1">
    <location>
        <position position="14"/>
    </location>
    <ligand>
        <name>CTP</name>
        <dbReference type="ChEBI" id="CHEBI:37563"/>
        <note>allosteric inhibitor</note>
    </ligand>
</feature>
<feature type="binding site" evidence="1">
    <location>
        <position position="14"/>
    </location>
    <ligand>
        <name>UTP</name>
        <dbReference type="ChEBI" id="CHEBI:46398"/>
    </ligand>
</feature>
<feature type="binding site" evidence="1">
    <location>
        <begin position="15"/>
        <end position="20"/>
    </location>
    <ligand>
        <name>ATP</name>
        <dbReference type="ChEBI" id="CHEBI:30616"/>
    </ligand>
</feature>
<feature type="binding site" evidence="1">
    <location>
        <position position="72"/>
    </location>
    <ligand>
        <name>ATP</name>
        <dbReference type="ChEBI" id="CHEBI:30616"/>
    </ligand>
</feature>
<feature type="binding site" evidence="1">
    <location>
        <position position="72"/>
    </location>
    <ligand>
        <name>Mg(2+)</name>
        <dbReference type="ChEBI" id="CHEBI:18420"/>
    </ligand>
</feature>
<feature type="binding site" evidence="1">
    <location>
        <position position="140"/>
    </location>
    <ligand>
        <name>Mg(2+)</name>
        <dbReference type="ChEBI" id="CHEBI:18420"/>
    </ligand>
</feature>
<feature type="binding site" evidence="1">
    <location>
        <begin position="147"/>
        <end position="149"/>
    </location>
    <ligand>
        <name>CTP</name>
        <dbReference type="ChEBI" id="CHEBI:37563"/>
        <note>allosteric inhibitor</note>
    </ligand>
</feature>
<feature type="binding site" evidence="1">
    <location>
        <begin position="187"/>
        <end position="192"/>
    </location>
    <ligand>
        <name>CTP</name>
        <dbReference type="ChEBI" id="CHEBI:37563"/>
        <note>allosteric inhibitor</note>
    </ligand>
</feature>
<feature type="binding site" evidence="1">
    <location>
        <begin position="187"/>
        <end position="192"/>
    </location>
    <ligand>
        <name>UTP</name>
        <dbReference type="ChEBI" id="CHEBI:46398"/>
    </ligand>
</feature>
<feature type="binding site" evidence="1">
    <location>
        <position position="223"/>
    </location>
    <ligand>
        <name>CTP</name>
        <dbReference type="ChEBI" id="CHEBI:37563"/>
        <note>allosteric inhibitor</note>
    </ligand>
</feature>
<feature type="binding site" evidence="1">
    <location>
        <position position="223"/>
    </location>
    <ligand>
        <name>UTP</name>
        <dbReference type="ChEBI" id="CHEBI:46398"/>
    </ligand>
</feature>
<feature type="binding site" evidence="1">
    <location>
        <begin position="239"/>
        <end position="241"/>
    </location>
    <ligand>
        <name>ATP</name>
        <dbReference type="ChEBI" id="CHEBI:30616"/>
    </ligand>
</feature>
<feature type="binding site" evidence="1">
    <location>
        <position position="352"/>
    </location>
    <ligand>
        <name>L-glutamine</name>
        <dbReference type="ChEBI" id="CHEBI:58359"/>
    </ligand>
</feature>
<feature type="binding site" evidence="1">
    <location>
        <begin position="380"/>
        <end position="383"/>
    </location>
    <ligand>
        <name>L-glutamine</name>
        <dbReference type="ChEBI" id="CHEBI:58359"/>
    </ligand>
</feature>
<feature type="binding site" evidence="1">
    <location>
        <position position="403"/>
    </location>
    <ligand>
        <name>L-glutamine</name>
        <dbReference type="ChEBI" id="CHEBI:58359"/>
    </ligand>
</feature>
<feature type="binding site" evidence="1">
    <location>
        <position position="470"/>
    </location>
    <ligand>
        <name>L-glutamine</name>
        <dbReference type="ChEBI" id="CHEBI:58359"/>
    </ligand>
</feature>
<organism>
    <name type="scientific">Psychromonas ingrahamii (strain DSM 17664 / CCUG 51855 / 37)</name>
    <dbReference type="NCBI Taxonomy" id="357804"/>
    <lineage>
        <taxon>Bacteria</taxon>
        <taxon>Pseudomonadati</taxon>
        <taxon>Pseudomonadota</taxon>
        <taxon>Gammaproteobacteria</taxon>
        <taxon>Alteromonadales</taxon>
        <taxon>Psychromonadaceae</taxon>
        <taxon>Psychromonas</taxon>
    </lineage>
</organism>
<accession>A1SSQ6</accession>